<reference key="1">
    <citation type="journal article" date="2006" name="BMC Genomics">
        <title>The complete chloroplast genome sequence of Gossypium hirsutum: organization and phylogenetic relationships to other angiosperms.</title>
        <authorList>
            <person name="Lee S.-B."/>
            <person name="Kaittanis C."/>
            <person name="Jansen R.K."/>
            <person name="Hostetler J.B."/>
            <person name="Tallon L.J."/>
            <person name="Town C.D."/>
            <person name="Daniell H."/>
        </authorList>
    </citation>
    <scope>NUCLEOTIDE SEQUENCE [LARGE SCALE GENOMIC DNA]</scope>
    <source>
        <strain>cv. Coker 310FR</strain>
    </source>
</reference>
<name>CYF_GOSHI</name>
<keyword id="KW-0150">Chloroplast</keyword>
<keyword id="KW-0249">Electron transport</keyword>
<keyword id="KW-0349">Heme</keyword>
<keyword id="KW-0408">Iron</keyword>
<keyword id="KW-0472">Membrane</keyword>
<keyword id="KW-0479">Metal-binding</keyword>
<keyword id="KW-0602">Photosynthesis</keyword>
<keyword id="KW-0934">Plastid</keyword>
<keyword id="KW-1185">Reference proteome</keyword>
<keyword id="KW-0732">Signal</keyword>
<keyword id="KW-0793">Thylakoid</keyword>
<keyword id="KW-0812">Transmembrane</keyword>
<keyword id="KW-1133">Transmembrane helix</keyword>
<keyword id="KW-0813">Transport</keyword>
<evidence type="ECO:0000250" key="1"/>
<evidence type="ECO:0000255" key="2">
    <source>
        <dbReference type="HAMAP-Rule" id="MF_00610"/>
    </source>
</evidence>
<organism>
    <name type="scientific">Gossypium hirsutum</name>
    <name type="common">Upland cotton</name>
    <name type="synonym">Gossypium mexicanum</name>
    <dbReference type="NCBI Taxonomy" id="3635"/>
    <lineage>
        <taxon>Eukaryota</taxon>
        <taxon>Viridiplantae</taxon>
        <taxon>Streptophyta</taxon>
        <taxon>Embryophyta</taxon>
        <taxon>Tracheophyta</taxon>
        <taxon>Spermatophyta</taxon>
        <taxon>Magnoliopsida</taxon>
        <taxon>eudicotyledons</taxon>
        <taxon>Gunneridae</taxon>
        <taxon>Pentapetalae</taxon>
        <taxon>rosids</taxon>
        <taxon>malvids</taxon>
        <taxon>Malvales</taxon>
        <taxon>Malvaceae</taxon>
        <taxon>Malvoideae</taxon>
        <taxon>Gossypium</taxon>
    </lineage>
</organism>
<accession>Q2L921</accession>
<proteinExistence type="inferred from homology"/>
<sequence length="320" mass="35198">MQTRNTFSWIKEEITRSISVSLMIYIITGASISNAYPIFAQQGYENPREATGRIVCANCHLANKPVDIEVPQAVLPDTVFEAVVRIPYDMQLKQVLANGKKGALNVGAVLILPEGFELAPPDRISPEMKEKIGNLSFQNYRPTKKNILVIGPVPGKKYSEITFPILSPDPASNKDAHFLKYPIYVGGNRGRGQIYPDGNKSNNTVYNATATGIVSKIIRKEKGGYEITITDALDGHQVVDIIPPGPELLVSEGESIKLDQPLTINPNVGGFGQGDAEIVLQDPLRVQGLLFFLASIVFAQIFLVLKKKQFEKVQVSEMNF</sequence>
<gene>
    <name evidence="2" type="primary">petA</name>
</gene>
<comment type="function">
    <text evidence="2">Component of the cytochrome b6-f complex, which mediates electron transfer between photosystem II (PSII) and photosystem I (PSI), cyclic electron flow around PSI, and state transitions.</text>
</comment>
<comment type="cofactor">
    <cofactor evidence="2">
        <name>heme</name>
        <dbReference type="ChEBI" id="CHEBI:30413"/>
    </cofactor>
    <text evidence="2">Binds 1 heme group covalently.</text>
</comment>
<comment type="subunit">
    <text evidence="1">The 4 large subunits of the cytochrome b6-f complex are cytochrome b6, subunit IV (17 kDa polypeptide, petD), cytochrome f and the Rieske protein, while the 4 small subunits are PetG, PetL, PetM and PetN. The complex functions as a dimer (By similarity).</text>
</comment>
<comment type="subcellular location">
    <subcellularLocation>
        <location evidence="2">Plastid</location>
        <location evidence="2">Chloroplast thylakoid membrane</location>
        <topology evidence="2">Single-pass membrane protein</topology>
    </subcellularLocation>
</comment>
<comment type="similarity">
    <text evidence="2">Belongs to the cytochrome f family.</text>
</comment>
<protein>
    <recommendedName>
        <fullName evidence="2">Cytochrome f</fullName>
    </recommendedName>
</protein>
<geneLocation type="chloroplast"/>
<dbReference type="EMBL" id="DQ345959">
    <property type="protein sequence ID" value="ABC73641.1"/>
    <property type="molecule type" value="Genomic_DNA"/>
</dbReference>
<dbReference type="RefSeq" id="YP_538948.1">
    <property type="nucleotide sequence ID" value="NC_007944.1"/>
</dbReference>
<dbReference type="SMR" id="Q2L921"/>
<dbReference type="GeneID" id="3989162"/>
<dbReference type="KEGG" id="ghi:3989162"/>
<dbReference type="OrthoDB" id="9387at41938"/>
<dbReference type="Proteomes" id="UP000189702">
    <property type="component" value="Chloroplast Pltd"/>
</dbReference>
<dbReference type="GO" id="GO:0009535">
    <property type="term" value="C:chloroplast thylakoid membrane"/>
    <property type="evidence" value="ECO:0007669"/>
    <property type="project" value="UniProtKB-SubCell"/>
</dbReference>
<dbReference type="GO" id="GO:0009055">
    <property type="term" value="F:electron transfer activity"/>
    <property type="evidence" value="ECO:0007669"/>
    <property type="project" value="UniProtKB-UniRule"/>
</dbReference>
<dbReference type="GO" id="GO:0020037">
    <property type="term" value="F:heme binding"/>
    <property type="evidence" value="ECO:0007669"/>
    <property type="project" value="InterPro"/>
</dbReference>
<dbReference type="GO" id="GO:0005506">
    <property type="term" value="F:iron ion binding"/>
    <property type="evidence" value="ECO:0007669"/>
    <property type="project" value="InterPro"/>
</dbReference>
<dbReference type="GO" id="GO:0015979">
    <property type="term" value="P:photosynthesis"/>
    <property type="evidence" value="ECO:0007669"/>
    <property type="project" value="UniProtKB-UniRule"/>
</dbReference>
<dbReference type="FunFam" id="1.20.5.700:FF:000001">
    <property type="entry name" value="Cytochrome f"/>
    <property type="match status" value="1"/>
</dbReference>
<dbReference type="FunFam" id="2.40.50.100:FF:000007">
    <property type="entry name" value="Cytochrome f"/>
    <property type="match status" value="1"/>
</dbReference>
<dbReference type="FunFam" id="2.60.40.830:FF:000001">
    <property type="entry name" value="Cytochrome f"/>
    <property type="match status" value="1"/>
</dbReference>
<dbReference type="Gene3D" id="2.40.50.100">
    <property type="match status" value="1"/>
</dbReference>
<dbReference type="Gene3D" id="2.60.40.830">
    <property type="entry name" value="Cytochrome f large domain"/>
    <property type="match status" value="1"/>
</dbReference>
<dbReference type="Gene3D" id="1.20.5.700">
    <property type="entry name" value="Single helix bin"/>
    <property type="match status" value="1"/>
</dbReference>
<dbReference type="HAMAP" id="MF_00610">
    <property type="entry name" value="Cytb6_f_cytF"/>
    <property type="match status" value="1"/>
</dbReference>
<dbReference type="InterPro" id="IPR024058">
    <property type="entry name" value="Cyt-f_TM"/>
</dbReference>
<dbReference type="InterPro" id="IPR002325">
    <property type="entry name" value="Cyt_f"/>
</dbReference>
<dbReference type="InterPro" id="IPR024094">
    <property type="entry name" value="Cyt_f_lg_dom"/>
</dbReference>
<dbReference type="InterPro" id="IPR036826">
    <property type="entry name" value="Cyt_f_lg_dom_sf"/>
</dbReference>
<dbReference type="InterPro" id="IPR011054">
    <property type="entry name" value="Rudment_hybrid_motif"/>
</dbReference>
<dbReference type="PANTHER" id="PTHR33288">
    <property type="match status" value="1"/>
</dbReference>
<dbReference type="PANTHER" id="PTHR33288:SF10">
    <property type="entry name" value="CYTOCHROME F"/>
    <property type="match status" value="1"/>
</dbReference>
<dbReference type="Pfam" id="PF01333">
    <property type="entry name" value="Apocytochr_F_C"/>
    <property type="match status" value="1"/>
</dbReference>
<dbReference type="Pfam" id="PF16639">
    <property type="entry name" value="Apocytochr_F_N"/>
    <property type="match status" value="1"/>
</dbReference>
<dbReference type="PRINTS" id="PR00610">
    <property type="entry name" value="CYTOCHROMEF"/>
</dbReference>
<dbReference type="SUPFAM" id="SSF103431">
    <property type="entry name" value="Cytochrome f subunit of the cytochrome b6f complex, transmembrane anchor"/>
    <property type="match status" value="1"/>
</dbReference>
<dbReference type="SUPFAM" id="SSF49441">
    <property type="entry name" value="Cytochrome f, large domain"/>
    <property type="match status" value="1"/>
</dbReference>
<dbReference type="SUPFAM" id="SSF51246">
    <property type="entry name" value="Rudiment single hybrid motif"/>
    <property type="match status" value="1"/>
</dbReference>
<dbReference type="PROSITE" id="PS51010">
    <property type="entry name" value="CYTF"/>
    <property type="match status" value="1"/>
</dbReference>
<feature type="signal peptide" evidence="2">
    <location>
        <begin position="1"/>
        <end position="35"/>
    </location>
</feature>
<feature type="chain" id="PRO_0000275417" description="Cytochrome f">
    <location>
        <begin position="36"/>
        <end position="320"/>
    </location>
</feature>
<feature type="transmembrane region" description="Helical" evidence="2">
    <location>
        <begin position="286"/>
        <end position="306"/>
    </location>
</feature>
<feature type="binding site" description="axial binding residue" evidence="2">
    <location>
        <position position="36"/>
    </location>
    <ligand>
        <name>heme</name>
        <dbReference type="ChEBI" id="CHEBI:30413"/>
    </ligand>
    <ligandPart>
        <name>Fe</name>
        <dbReference type="ChEBI" id="CHEBI:18248"/>
    </ligandPart>
</feature>
<feature type="binding site" description="covalent" evidence="2">
    <location>
        <position position="56"/>
    </location>
    <ligand>
        <name>heme</name>
        <dbReference type="ChEBI" id="CHEBI:30413"/>
    </ligand>
</feature>
<feature type="binding site" description="covalent" evidence="2">
    <location>
        <position position="59"/>
    </location>
    <ligand>
        <name>heme</name>
        <dbReference type="ChEBI" id="CHEBI:30413"/>
    </ligand>
</feature>
<feature type="binding site" description="axial binding residue" evidence="2">
    <location>
        <position position="60"/>
    </location>
    <ligand>
        <name>heme</name>
        <dbReference type="ChEBI" id="CHEBI:30413"/>
    </ligand>
    <ligandPart>
        <name>Fe</name>
        <dbReference type="ChEBI" id="CHEBI:18248"/>
    </ligandPart>
</feature>